<name>RPO1C_METTW</name>
<feature type="chain" id="PRO_0000074018" description="DNA-directed RNA polymerase subunit Rpo1C">
    <location>
        <begin position="1"/>
        <end position="449"/>
    </location>
</feature>
<feature type="region of interest" description="Unknown">
    <location>
        <begin position="1"/>
        <end position="68"/>
    </location>
</feature>
<feature type="region of interest" description="DNA-directed RNA polymerase subunit Rpo1C">
    <location>
        <begin position="69"/>
        <end position="449"/>
    </location>
</feature>
<comment type="function">
    <text evidence="1">DNA-dependent RNA polymerase (RNAP) catalyzes the transcription of DNA into RNA using the four ribonucleoside triphosphates as substrates. Forms part of the jaw domain.</text>
</comment>
<comment type="catalytic activity">
    <reaction evidence="1">
        <text>RNA(n) + a ribonucleoside 5'-triphosphate = RNA(n+1) + diphosphate</text>
        <dbReference type="Rhea" id="RHEA:21248"/>
        <dbReference type="Rhea" id="RHEA-COMP:14527"/>
        <dbReference type="Rhea" id="RHEA-COMP:17342"/>
        <dbReference type="ChEBI" id="CHEBI:33019"/>
        <dbReference type="ChEBI" id="CHEBI:61557"/>
        <dbReference type="ChEBI" id="CHEBI:140395"/>
        <dbReference type="EC" id="2.7.7.6"/>
    </reaction>
</comment>
<comment type="subunit">
    <text evidence="1 2">Part of the RNA polymerase complex.</text>
</comment>
<comment type="subcellular location">
    <subcellularLocation>
        <location evidence="1">Cytoplasm</location>
    </subcellularLocation>
</comment>
<comment type="similarity">
    <text evidence="1">Belongs to the RNA polymerase beta' chain family.</text>
</comment>
<proteinExistence type="evidence at protein level"/>
<dbReference type="EC" id="2.7.7.6" evidence="1"/>
<dbReference type="EMBL" id="X08038">
    <property type="protein sequence ID" value="CAA30839.1"/>
    <property type="molecule type" value="Genomic_DNA"/>
</dbReference>
<dbReference type="PIR" id="S02197">
    <property type="entry name" value="S02197"/>
</dbReference>
<dbReference type="SMR" id="P09847"/>
<dbReference type="GO" id="GO:0005737">
    <property type="term" value="C:cytoplasm"/>
    <property type="evidence" value="ECO:0007669"/>
    <property type="project" value="UniProtKB-SubCell"/>
</dbReference>
<dbReference type="GO" id="GO:0000428">
    <property type="term" value="C:DNA-directed RNA polymerase complex"/>
    <property type="evidence" value="ECO:0007669"/>
    <property type="project" value="UniProtKB-KW"/>
</dbReference>
<dbReference type="GO" id="GO:0003677">
    <property type="term" value="F:DNA binding"/>
    <property type="evidence" value="ECO:0007669"/>
    <property type="project" value="UniProtKB-UniRule"/>
</dbReference>
<dbReference type="GO" id="GO:0003899">
    <property type="term" value="F:DNA-directed RNA polymerase activity"/>
    <property type="evidence" value="ECO:0007669"/>
    <property type="project" value="UniProtKB-UniRule"/>
</dbReference>
<dbReference type="GO" id="GO:0006351">
    <property type="term" value="P:DNA-templated transcription"/>
    <property type="evidence" value="ECO:0007669"/>
    <property type="project" value="UniProtKB-UniRule"/>
</dbReference>
<dbReference type="CDD" id="cd06528">
    <property type="entry name" value="RNAP_A"/>
    <property type="match status" value="1"/>
</dbReference>
<dbReference type="Gene3D" id="1.10.150.390">
    <property type="match status" value="1"/>
</dbReference>
<dbReference type="HAMAP" id="MF_00411">
    <property type="entry name" value="RNApol_arch_Rpo1C"/>
    <property type="match status" value="1"/>
</dbReference>
<dbReference type="InterPro" id="IPR045867">
    <property type="entry name" value="DNA-dir_RpoC_beta_prime"/>
</dbReference>
<dbReference type="InterPro" id="IPR007081">
    <property type="entry name" value="RNA_pol_Rpb1_5"/>
</dbReference>
<dbReference type="InterPro" id="IPR012757">
    <property type="entry name" value="RPO1C"/>
</dbReference>
<dbReference type="NCBIfam" id="TIGR02389">
    <property type="entry name" value="RNA_pol_rpoA2"/>
    <property type="match status" value="1"/>
</dbReference>
<dbReference type="PANTHER" id="PTHR19376">
    <property type="entry name" value="DNA-DIRECTED RNA POLYMERASE"/>
    <property type="match status" value="1"/>
</dbReference>
<dbReference type="PANTHER" id="PTHR19376:SF32">
    <property type="entry name" value="DNA-DIRECTED RNA POLYMERASE III SUBUNIT RPC1"/>
    <property type="match status" value="1"/>
</dbReference>
<dbReference type="Pfam" id="PF04998">
    <property type="entry name" value="RNA_pol_Rpb1_5"/>
    <property type="match status" value="1"/>
</dbReference>
<dbReference type="SUPFAM" id="SSF64484">
    <property type="entry name" value="beta and beta-prime subunits of DNA dependent RNA-polymerase"/>
    <property type="match status" value="1"/>
</dbReference>
<accession>P09847</accession>
<sequence length="449" mass="50796">MQDVIKKIEDYSSRNGIMLPNPVTEYVAGIAEEEKLKDPELHDLVRLFSRICERNRGLEGEELLKAVEDEYLRILKVRELVKRKRAKFPPRLIEEIAEAIKRHGLSDDELDELVRGVRRAYERAMVEAGEAVGTVAAQSVGEPGTQMTMRTFHYAGVAELNVTLGLPRLIEIVDARKKISTPTMSIYFEGDRKYDEEFVRKKANKICKSTLNDVLKNFSIQYADMSVEAELDEEKIREKHLEYDDIIAKVEKTFKKVEIDNNILRFEPPKPTIRELRLLADKVRKLQISGVKNIGKVVIRKEDDEWVIHTEGSNLGDRFKEEGVDKVRTTTNDIHEIETVLGIEAARNAIIHEAKRTMEEQGLTVDIRHIMLVADMMTADGSVKSIGRHGISGEKASVLARASFEETGKHLLRASIRGEVDHLTGIIENIIIGQPIPLGTGSVSVIMKK</sequence>
<reference key="1">
    <citation type="journal article" date="1988" name="Nucleic Acids Res.">
        <title>Relatedness of archaebacterial RNA polymerase core subunits to their eubacterial and eukaryotic equivalents.</title>
        <authorList>
            <person name="Berghoefer B."/>
            <person name="Kroeckel L."/>
            <person name="Koertner C."/>
            <person name="Truss M."/>
            <person name="Schallenberg J."/>
            <person name="Klein A."/>
        </authorList>
    </citation>
    <scope>NUCLEOTIDE SEQUENCE [GENOMIC DNA]</scope>
    <scope>SUBUNIT</scope>
</reference>
<gene>
    <name evidence="1" type="primary">rpo1C</name>
    <name evidence="1" type="synonym">rpoA2</name>
</gene>
<organism>
    <name type="scientific">Methanothermobacter thermautotrophicus (strain Winter)</name>
    <name type="common">Methanobacterium thermoautotrophicum</name>
    <dbReference type="NCBI Taxonomy" id="79930"/>
    <lineage>
        <taxon>Archaea</taxon>
        <taxon>Methanobacteriati</taxon>
        <taxon>Methanobacteriota</taxon>
        <taxon>Methanomada group</taxon>
        <taxon>Methanobacteria</taxon>
        <taxon>Methanobacteriales</taxon>
        <taxon>Methanobacteriaceae</taxon>
        <taxon>Methanothermobacter</taxon>
    </lineage>
</organism>
<keyword id="KW-0963">Cytoplasm</keyword>
<keyword id="KW-0238">DNA-binding</keyword>
<keyword id="KW-0240">DNA-directed RNA polymerase</keyword>
<keyword id="KW-0548">Nucleotidyltransferase</keyword>
<keyword id="KW-0804">Transcription</keyword>
<keyword id="KW-0808">Transferase</keyword>
<evidence type="ECO:0000255" key="1">
    <source>
        <dbReference type="HAMAP-Rule" id="MF_00411"/>
    </source>
</evidence>
<evidence type="ECO:0000269" key="2">
    <source>
    </source>
</evidence>
<protein>
    <recommendedName>
        <fullName evidence="1">DNA-directed RNA polymerase subunit Rpo1C</fullName>
        <ecNumber evidence="1">2.7.7.6</ecNumber>
    </recommendedName>
    <alternativeName>
        <fullName evidence="1">DNA-directed RNA polymerase subunit A''</fullName>
    </alternativeName>
</protein>